<name>TCPG_CAEEL</name>
<accession>Q9N4J8</accession>
<reference evidence="7" key="1">
    <citation type="journal article" date="1998" name="Science">
        <title>Genome sequence of the nematode C. elegans: a platform for investigating biology.</title>
        <authorList>
            <consortium name="The C. elegans sequencing consortium"/>
        </authorList>
    </citation>
    <scope>NUCLEOTIDE SEQUENCE [LARGE SCALE GENOMIC DNA]</scope>
    <source>
        <strain evidence="7">Bristol N2</strain>
    </source>
</reference>
<reference evidence="6" key="2">
    <citation type="journal article" date="2005" name="Dev. Cell">
        <title>Identification and characterization of factors required for microtubule growth and nucleation in the early C. elegans embryo.</title>
        <authorList>
            <person name="Srayko M."/>
            <person name="Kaya A."/>
            <person name="Stamford J."/>
            <person name="Hyman A.A."/>
        </authorList>
    </citation>
    <scope>FUNCTION</scope>
    <scope>DISRUPTION PHENOTYPE</scope>
</reference>
<reference key="3">
    <citation type="journal article" date="2024" name="Science">
        <title>Brain malformations and seizures by impaired chaperonin function of TRiC.</title>
        <authorList>
            <person name="Kraft F."/>
            <person name="Rodriguez-Aliaga P."/>
            <person name="Yuan W."/>
            <person name="Franken L."/>
            <person name="Zajt K."/>
            <person name="Hasan D."/>
            <person name="Lee T.T."/>
            <person name="Flex E."/>
            <person name="Hentschel A."/>
            <person name="Innes A.M."/>
            <person name="Zheng B."/>
            <person name="Julia Suh D.S."/>
            <person name="Knopp C."/>
            <person name="Lausberg E."/>
            <person name="Krause J."/>
            <person name="Zhang X."/>
            <person name="Trapane P."/>
            <person name="Carroll R."/>
            <person name="McClatchey M."/>
            <person name="Fry A.E."/>
            <person name="Wang L."/>
            <person name="Giesselmann S."/>
            <person name="Hoang H."/>
            <person name="Baldridge D."/>
            <person name="Silverman G.A."/>
            <person name="Radio F.C."/>
            <person name="Bertini E."/>
            <person name="Ciolfi A."/>
            <person name="Blood K.A."/>
            <person name="de Sainte Agathe J.M."/>
            <person name="Charles P."/>
            <person name="Bergant G."/>
            <person name="Cuturilo G."/>
            <person name="Peterlin B."/>
            <person name="Diderich K."/>
            <person name="Streff H."/>
            <person name="Robak L."/>
            <person name="Oegema R."/>
            <person name="van Binsbergen E."/>
            <person name="Herriges J."/>
            <person name="Saunders C.J."/>
            <person name="Maier A."/>
            <person name="Wolking S."/>
            <person name="Weber Y."/>
            <person name="Lochmueller H."/>
            <person name="Meyer S."/>
            <person name="Aleman A."/>
            <person name="Polavarapu K."/>
            <person name="Nicolas G."/>
            <person name="Goldenberg A."/>
            <person name="Guyant L."/>
            <person name="Pope K."/>
            <person name="Hehmeyer K.N."/>
            <person name="Monaghan K.G."/>
            <person name="Quade A."/>
            <person name="Smol T."/>
            <person name="Caumes R."/>
            <person name="Duerinckx S."/>
            <person name="Depondt C."/>
            <person name="Van Paesschen W."/>
            <person name="Rieubland C."/>
            <person name="Poloni C."/>
            <person name="Guipponi M."/>
            <person name="Arcioni S."/>
            <person name="Meuwissen M."/>
            <person name="Jansen A.C."/>
            <person name="Rosenblum J."/>
            <person name="Haack T.B."/>
            <person name="Bertrand M."/>
            <person name="Gerstner L."/>
            <person name="Magg J."/>
            <person name="Riess O."/>
            <person name="Schulz J.B."/>
            <person name="Wagner N."/>
            <person name="Wiesmann M."/>
            <person name="Weis J."/>
            <person name="Eggermann T."/>
            <person name="Begemann M."/>
            <person name="Roos A."/>
            <person name="Haeusler M."/>
            <person name="Schedl T."/>
            <person name="Tartaglia M."/>
            <person name="Bremer J."/>
            <person name="Pak S.C."/>
            <person name="Frydman J."/>
            <person name="Elbracht M."/>
            <person name="Kurth I."/>
        </authorList>
    </citation>
    <scope>MUTAGENESIS OF GLN-14</scope>
</reference>
<evidence type="ECO:0000250" key="1">
    <source>
        <dbReference type="UniProtKB" id="P48605"/>
    </source>
</evidence>
<evidence type="ECO:0000250" key="2">
    <source>
        <dbReference type="UniProtKB" id="P49368"/>
    </source>
</evidence>
<evidence type="ECO:0000255" key="3">
    <source>
        <dbReference type="RuleBase" id="RU004187"/>
    </source>
</evidence>
<evidence type="ECO:0000269" key="4">
    <source>
    </source>
</evidence>
<evidence type="ECO:0000269" key="5">
    <source>
    </source>
</evidence>
<evidence type="ECO:0000305" key="6"/>
<evidence type="ECO:0000312" key="7">
    <source>
        <dbReference type="Proteomes" id="UP000001940"/>
    </source>
</evidence>
<evidence type="ECO:0000312" key="8">
    <source>
        <dbReference type="WormBase" id="F54A3.3"/>
    </source>
</evidence>
<sequence length="543" mass="60457">MRGAGQQPIIVLSQGTKRESGHQVQIGNINACKTIADVIRTSLGPRAMLKMLMDPMGGIVMTNDGNAILREITVKHPAAKSMIEIARTQDEETGDGTTSVIILAGEVMAHAQTYLEQKTHPTLIIKAYRQALEDMIQWSENKFSKTVDITDDAEIAKVVKSCLGTKMISKWMDLAVNISIQAVKTIRVEKAGVREIDIKRYCRIEKIPGGRIEDSQVVKGIVVNKDILHAKMRRRIENPRIVLLDCNLEYKKGESQTSLEIMREEDISAILEQEEQAIRKQCDEIIKLKPDLVFTEKGISDLAQHFLLKAGITCLRRLKKTDNNRLARVCGARVVHDTSDLRDEDVGTKAQLFEVVKIADEYYTYVTAETTTACTVVLRGPSKDVINEVERNLQDSLHVVRNIMINPKLVPGGGALEMALSREIEQQGAKMDGVKKWPYKAIGLALEVIPRTLIQNCGGSTIRKMTELRAIHAQNAENWTFGVDGTSGDLVDMNKLEIWDPLAVRIQVLKTAIETSVMLLRIDDIVSGTKKAVGGEKQEMMPQ</sequence>
<keyword id="KW-0067">ATP-binding</keyword>
<keyword id="KW-0143">Chaperone</keyword>
<keyword id="KW-0963">Cytoplasm</keyword>
<keyword id="KW-0493">Microtubule</keyword>
<keyword id="KW-0547">Nucleotide-binding</keyword>
<keyword id="KW-1185">Reference proteome</keyword>
<gene>
    <name evidence="8" type="primary">cct-3</name>
    <name evidence="8" type="ORF">F54A3.3</name>
</gene>
<protein>
    <recommendedName>
        <fullName evidence="6">T-complex protein 1 subunit gamma</fullName>
    </recommendedName>
</protein>
<organism evidence="7">
    <name type="scientific">Caenorhabditis elegans</name>
    <dbReference type="NCBI Taxonomy" id="6239"/>
    <lineage>
        <taxon>Eukaryota</taxon>
        <taxon>Metazoa</taxon>
        <taxon>Ecdysozoa</taxon>
        <taxon>Nematoda</taxon>
        <taxon>Chromadorea</taxon>
        <taxon>Rhabditida</taxon>
        <taxon>Rhabditina</taxon>
        <taxon>Rhabditomorpha</taxon>
        <taxon>Rhabditoidea</taxon>
        <taxon>Rhabditidae</taxon>
        <taxon>Peloderinae</taxon>
        <taxon>Caenorhabditis</taxon>
    </lineage>
</organism>
<dbReference type="EMBL" id="BX284602">
    <property type="protein sequence ID" value="CCD71741.1"/>
    <property type="molecule type" value="Genomic_DNA"/>
</dbReference>
<dbReference type="RefSeq" id="NP_494218.2">
    <property type="nucleotide sequence ID" value="NM_061817.5"/>
</dbReference>
<dbReference type="SMR" id="Q9N4J8"/>
<dbReference type="FunCoup" id="Q9N4J8">
    <property type="interactions" value="2991"/>
</dbReference>
<dbReference type="STRING" id="6239.F54A3.3.1"/>
<dbReference type="PaxDb" id="6239-F54A3.3"/>
<dbReference type="PeptideAtlas" id="Q9N4J8"/>
<dbReference type="EnsemblMetazoa" id="F54A3.3.1">
    <property type="protein sequence ID" value="F54A3.3.1"/>
    <property type="gene ID" value="WBGene00018782"/>
</dbReference>
<dbReference type="GeneID" id="173581"/>
<dbReference type="KEGG" id="cel:CELE_F54A3.3"/>
<dbReference type="UCSC" id="F54A3.3">
    <property type="organism name" value="c. elegans"/>
</dbReference>
<dbReference type="AGR" id="WB:WBGene00018782"/>
<dbReference type="CTD" id="173581"/>
<dbReference type="WormBase" id="F54A3.3">
    <property type="protein sequence ID" value="CE31540"/>
    <property type="gene ID" value="WBGene00018782"/>
    <property type="gene designation" value="cct-3"/>
</dbReference>
<dbReference type="eggNOG" id="KOG0364">
    <property type="taxonomic scope" value="Eukaryota"/>
</dbReference>
<dbReference type="GeneTree" id="ENSGT00570000079224"/>
<dbReference type="HOGENOM" id="CLU_008891_7_3_1"/>
<dbReference type="InParanoid" id="Q9N4J8"/>
<dbReference type="OMA" id="CGGSTIR"/>
<dbReference type="OrthoDB" id="275057at2759"/>
<dbReference type="PhylomeDB" id="Q9N4J8"/>
<dbReference type="BRENDA" id="3.6.4.B10">
    <property type="organism ID" value="1045"/>
</dbReference>
<dbReference type="Reactome" id="R-CEL-390471">
    <property type="pathway name" value="Association of TriC/CCT with target proteins during biosynthesis"/>
</dbReference>
<dbReference type="Reactome" id="R-CEL-6814122">
    <property type="pathway name" value="Cooperation of PDCL (PhLP1) and TRiC/CCT in G-protein beta folding"/>
</dbReference>
<dbReference type="PRO" id="PR:Q9N4J8"/>
<dbReference type="Proteomes" id="UP000001940">
    <property type="component" value="Chromosome II"/>
</dbReference>
<dbReference type="Bgee" id="WBGene00018782">
    <property type="expression patterns" value="Expressed in larva and 4 other cell types or tissues"/>
</dbReference>
<dbReference type="GO" id="GO:0005832">
    <property type="term" value="C:chaperonin-containing T-complex"/>
    <property type="evidence" value="ECO:0000318"/>
    <property type="project" value="GO_Central"/>
</dbReference>
<dbReference type="GO" id="GO:0005874">
    <property type="term" value="C:microtubule"/>
    <property type="evidence" value="ECO:0007669"/>
    <property type="project" value="UniProtKB-KW"/>
</dbReference>
<dbReference type="GO" id="GO:0005524">
    <property type="term" value="F:ATP binding"/>
    <property type="evidence" value="ECO:0007669"/>
    <property type="project" value="UniProtKB-KW"/>
</dbReference>
<dbReference type="GO" id="GO:0016887">
    <property type="term" value="F:ATP hydrolysis activity"/>
    <property type="evidence" value="ECO:0007669"/>
    <property type="project" value="InterPro"/>
</dbReference>
<dbReference type="GO" id="GO:0140662">
    <property type="term" value="F:ATP-dependent protein folding chaperone"/>
    <property type="evidence" value="ECO:0007669"/>
    <property type="project" value="InterPro"/>
</dbReference>
<dbReference type="GO" id="GO:0051082">
    <property type="term" value="F:unfolded protein binding"/>
    <property type="evidence" value="ECO:0000318"/>
    <property type="project" value="GO_Central"/>
</dbReference>
<dbReference type="GO" id="GO:0006457">
    <property type="term" value="P:protein folding"/>
    <property type="evidence" value="ECO:0000318"/>
    <property type="project" value="GO_Central"/>
</dbReference>
<dbReference type="CDD" id="cd03337">
    <property type="entry name" value="TCP1_gamma"/>
    <property type="match status" value="1"/>
</dbReference>
<dbReference type="FunFam" id="1.10.560.10:FF:000085">
    <property type="entry name" value="T-complex protein 1 subunit gamma"/>
    <property type="match status" value="1"/>
</dbReference>
<dbReference type="FunFam" id="3.50.7.10:FF:000005">
    <property type="entry name" value="T-complex protein 1 subunit gamma"/>
    <property type="match status" value="1"/>
</dbReference>
<dbReference type="Gene3D" id="3.50.7.10">
    <property type="entry name" value="GroEL"/>
    <property type="match status" value="1"/>
</dbReference>
<dbReference type="Gene3D" id="1.10.560.10">
    <property type="entry name" value="GroEL-like equatorial domain"/>
    <property type="match status" value="1"/>
</dbReference>
<dbReference type="Gene3D" id="3.30.260.10">
    <property type="entry name" value="TCP-1-like chaperonin intermediate domain"/>
    <property type="match status" value="1"/>
</dbReference>
<dbReference type="InterPro" id="IPR012719">
    <property type="entry name" value="Chap_CCT_gamma"/>
</dbReference>
<dbReference type="InterPro" id="IPR017998">
    <property type="entry name" value="Chaperone_TCP-1"/>
</dbReference>
<dbReference type="InterPro" id="IPR002194">
    <property type="entry name" value="Chaperonin_TCP-1_CS"/>
</dbReference>
<dbReference type="InterPro" id="IPR002423">
    <property type="entry name" value="Cpn60/GroEL/TCP-1"/>
</dbReference>
<dbReference type="InterPro" id="IPR027409">
    <property type="entry name" value="GroEL-like_apical_dom_sf"/>
</dbReference>
<dbReference type="InterPro" id="IPR027413">
    <property type="entry name" value="GROEL-like_equatorial_sf"/>
</dbReference>
<dbReference type="InterPro" id="IPR027410">
    <property type="entry name" value="TCP-1-like_intermed_sf"/>
</dbReference>
<dbReference type="InterPro" id="IPR053374">
    <property type="entry name" value="TCP-1_chaperonin"/>
</dbReference>
<dbReference type="InterPro" id="IPR054827">
    <property type="entry name" value="thermosome_alpha"/>
</dbReference>
<dbReference type="NCBIfam" id="TIGR02344">
    <property type="entry name" value="chap_CCT_gamma"/>
    <property type="match status" value="1"/>
</dbReference>
<dbReference type="NCBIfam" id="NF041082">
    <property type="entry name" value="thermosome_alpha"/>
    <property type="match status" value="1"/>
</dbReference>
<dbReference type="NCBIfam" id="NF041083">
    <property type="entry name" value="thermosome_beta"/>
    <property type="match status" value="1"/>
</dbReference>
<dbReference type="PANTHER" id="PTHR11353">
    <property type="entry name" value="CHAPERONIN"/>
    <property type="match status" value="1"/>
</dbReference>
<dbReference type="Pfam" id="PF00118">
    <property type="entry name" value="Cpn60_TCP1"/>
    <property type="match status" value="1"/>
</dbReference>
<dbReference type="PRINTS" id="PR00304">
    <property type="entry name" value="TCOMPLEXTCP1"/>
</dbReference>
<dbReference type="SUPFAM" id="SSF52029">
    <property type="entry name" value="GroEL apical domain-like"/>
    <property type="match status" value="1"/>
</dbReference>
<dbReference type="SUPFAM" id="SSF48592">
    <property type="entry name" value="GroEL equatorial domain-like"/>
    <property type="match status" value="1"/>
</dbReference>
<dbReference type="SUPFAM" id="SSF54849">
    <property type="entry name" value="GroEL-intermediate domain like"/>
    <property type="match status" value="1"/>
</dbReference>
<dbReference type="PROSITE" id="PS00750">
    <property type="entry name" value="TCP1_1"/>
    <property type="match status" value="1"/>
</dbReference>
<dbReference type="PROSITE" id="PS00751">
    <property type="entry name" value="TCP1_2"/>
    <property type="match status" value="1"/>
</dbReference>
<dbReference type="PROSITE" id="PS00995">
    <property type="entry name" value="TCP1_3"/>
    <property type="match status" value="1"/>
</dbReference>
<proteinExistence type="evidence at protein level"/>
<feature type="chain" id="PRO_0000436249" description="T-complex protein 1 subunit gamma" evidence="6">
    <location>
        <begin position="1"/>
        <end position="543"/>
    </location>
</feature>
<feature type="mutagenesis site" description="Homozygous worms show reduced motility and a reduced number of progeny, while heterozygous animals have a substantial crawling speed defect. Homozygous worms have aggregate-like actin puncta throughout the intestinal cell cytoplasm." evidence="5">
    <original>Q</original>
    <variation>R</variation>
    <location>
        <position position="14"/>
    </location>
</feature>
<comment type="function">
    <text evidence="1 4">Molecular chaperone; assists the folding of proteins upon ATP hydrolysis (By similarity). Known to play a role, in vitro, in the folding of actin and tubulin (By similarity). Plays a role in microtubule polymerization (PubMed:16054029).</text>
</comment>
<comment type="subcellular location">
    <subcellularLocation>
        <location evidence="2">Cytoplasm</location>
    </subcellularLocation>
</comment>
<comment type="disruption phenotype">
    <text evidence="4">RNAi-mediated knockdown results in severely reduced microtubule growth rate.</text>
</comment>
<comment type="similarity">
    <text evidence="3">Belongs to the TCP-1 chaperonin family.</text>
</comment>